<reference key="1">
    <citation type="journal article" date="2008" name="J. Bacteriol.">
        <title>Genome sequence of the streptomycin-producing microorganism Streptomyces griseus IFO 13350.</title>
        <authorList>
            <person name="Ohnishi Y."/>
            <person name="Ishikawa J."/>
            <person name="Hara H."/>
            <person name="Suzuki H."/>
            <person name="Ikenoya M."/>
            <person name="Ikeda H."/>
            <person name="Yamashita A."/>
            <person name="Hattori M."/>
            <person name="Horinouchi S."/>
        </authorList>
    </citation>
    <scope>NUCLEOTIDE SEQUENCE [LARGE SCALE GENOMIC DNA]</scope>
    <source>
        <strain>JCM 4626 / CBS 651.72 / NBRC 13350 / KCC S-0626 / ISP 5235</strain>
    </source>
</reference>
<sequence length="115" mass="12720">MEARAQARYIRVTPMKARRVVDLIRGMDATEAQAVLRFAPQAASVPVGKVLDSAIANAAHNYDHTDASSLVISEAYVDEGPTLKRFRPRAQGRAYRIRKRTSHITVVVSSKEGTR</sequence>
<feature type="chain" id="PRO_0000354521" description="Large ribosomal subunit protein uL22">
    <location>
        <begin position="1"/>
        <end position="115"/>
    </location>
</feature>
<evidence type="ECO:0000255" key="1">
    <source>
        <dbReference type="HAMAP-Rule" id="MF_01331"/>
    </source>
</evidence>
<evidence type="ECO:0000305" key="2"/>
<comment type="function">
    <text evidence="1">This protein binds specifically to 23S rRNA; its binding is stimulated by other ribosomal proteins, e.g. L4, L17, and L20. It is important during the early stages of 50S assembly. It makes multiple contacts with different domains of the 23S rRNA in the assembled 50S subunit and ribosome (By similarity).</text>
</comment>
<comment type="function">
    <text evidence="1">The globular domain of the protein is located near the polypeptide exit tunnel on the outside of the subunit, while an extended beta-hairpin is found that lines the wall of the exit tunnel in the center of the 70S ribosome.</text>
</comment>
<comment type="subunit">
    <text evidence="1">Part of the 50S ribosomal subunit.</text>
</comment>
<comment type="similarity">
    <text evidence="1">Belongs to the universal ribosomal protein uL22 family.</text>
</comment>
<comment type="sequence caution" evidence="2">
    <conflict type="erroneous initiation">
        <sequence resource="EMBL-CDS" id="BAG19658"/>
    </conflict>
</comment>
<dbReference type="EMBL" id="AP009493">
    <property type="protein sequence ID" value="BAG19658.1"/>
    <property type="status" value="ALT_INIT"/>
    <property type="molecule type" value="Genomic_DNA"/>
</dbReference>
<dbReference type="RefSeq" id="WP_004571827.1">
    <property type="nucleotide sequence ID" value="NC_010572.1"/>
</dbReference>
<dbReference type="SMR" id="B1W402"/>
<dbReference type="GeneID" id="97269528"/>
<dbReference type="KEGG" id="sgr:SGR_2829"/>
<dbReference type="eggNOG" id="COG0091">
    <property type="taxonomic scope" value="Bacteria"/>
</dbReference>
<dbReference type="HOGENOM" id="CLU_083987_3_3_11"/>
<dbReference type="Proteomes" id="UP000001685">
    <property type="component" value="Chromosome"/>
</dbReference>
<dbReference type="GO" id="GO:0022625">
    <property type="term" value="C:cytosolic large ribosomal subunit"/>
    <property type="evidence" value="ECO:0007669"/>
    <property type="project" value="TreeGrafter"/>
</dbReference>
<dbReference type="GO" id="GO:0019843">
    <property type="term" value="F:rRNA binding"/>
    <property type="evidence" value="ECO:0007669"/>
    <property type="project" value="UniProtKB-UniRule"/>
</dbReference>
<dbReference type="GO" id="GO:0003735">
    <property type="term" value="F:structural constituent of ribosome"/>
    <property type="evidence" value="ECO:0007669"/>
    <property type="project" value="InterPro"/>
</dbReference>
<dbReference type="GO" id="GO:0006412">
    <property type="term" value="P:translation"/>
    <property type="evidence" value="ECO:0007669"/>
    <property type="project" value="UniProtKB-UniRule"/>
</dbReference>
<dbReference type="CDD" id="cd00336">
    <property type="entry name" value="Ribosomal_L22"/>
    <property type="match status" value="1"/>
</dbReference>
<dbReference type="FunFam" id="3.90.470.10:FF:000002">
    <property type="entry name" value="50S ribosomal protein L22"/>
    <property type="match status" value="1"/>
</dbReference>
<dbReference type="Gene3D" id="3.90.470.10">
    <property type="entry name" value="Ribosomal protein L22/L17"/>
    <property type="match status" value="1"/>
</dbReference>
<dbReference type="HAMAP" id="MF_01331_B">
    <property type="entry name" value="Ribosomal_uL22_B"/>
    <property type="match status" value="1"/>
</dbReference>
<dbReference type="InterPro" id="IPR001063">
    <property type="entry name" value="Ribosomal_uL22"/>
</dbReference>
<dbReference type="InterPro" id="IPR005727">
    <property type="entry name" value="Ribosomal_uL22_bac/chlpt-type"/>
</dbReference>
<dbReference type="InterPro" id="IPR047867">
    <property type="entry name" value="Ribosomal_uL22_bac/org-type"/>
</dbReference>
<dbReference type="InterPro" id="IPR018260">
    <property type="entry name" value="Ribosomal_uL22_CS"/>
</dbReference>
<dbReference type="InterPro" id="IPR036394">
    <property type="entry name" value="Ribosomal_uL22_sf"/>
</dbReference>
<dbReference type="NCBIfam" id="TIGR01044">
    <property type="entry name" value="rplV_bact"/>
    <property type="match status" value="1"/>
</dbReference>
<dbReference type="PANTHER" id="PTHR13501">
    <property type="entry name" value="CHLOROPLAST 50S RIBOSOMAL PROTEIN L22-RELATED"/>
    <property type="match status" value="1"/>
</dbReference>
<dbReference type="PANTHER" id="PTHR13501:SF8">
    <property type="entry name" value="LARGE RIBOSOMAL SUBUNIT PROTEIN UL22M"/>
    <property type="match status" value="1"/>
</dbReference>
<dbReference type="Pfam" id="PF00237">
    <property type="entry name" value="Ribosomal_L22"/>
    <property type="match status" value="1"/>
</dbReference>
<dbReference type="SUPFAM" id="SSF54843">
    <property type="entry name" value="Ribosomal protein L22"/>
    <property type="match status" value="1"/>
</dbReference>
<dbReference type="PROSITE" id="PS00464">
    <property type="entry name" value="RIBOSOMAL_L22"/>
    <property type="match status" value="1"/>
</dbReference>
<protein>
    <recommendedName>
        <fullName evidence="1">Large ribosomal subunit protein uL22</fullName>
    </recommendedName>
    <alternativeName>
        <fullName evidence="2">50S ribosomal protein L22</fullName>
    </alternativeName>
</protein>
<keyword id="KW-0687">Ribonucleoprotein</keyword>
<keyword id="KW-0689">Ribosomal protein</keyword>
<keyword id="KW-0694">RNA-binding</keyword>
<keyword id="KW-0699">rRNA-binding</keyword>
<organism>
    <name type="scientific">Streptomyces griseus subsp. griseus (strain JCM 4626 / CBS 651.72 / NBRC 13350 / KCC S-0626 / ISP 5235)</name>
    <dbReference type="NCBI Taxonomy" id="455632"/>
    <lineage>
        <taxon>Bacteria</taxon>
        <taxon>Bacillati</taxon>
        <taxon>Actinomycetota</taxon>
        <taxon>Actinomycetes</taxon>
        <taxon>Kitasatosporales</taxon>
        <taxon>Streptomycetaceae</taxon>
        <taxon>Streptomyces</taxon>
    </lineage>
</organism>
<accession>B1W402</accession>
<proteinExistence type="inferred from homology"/>
<gene>
    <name evidence="1" type="primary">rplV</name>
    <name type="ordered locus">SGR_2829</name>
</gene>
<name>RL22_STRGG</name>